<evidence type="ECO:0000255" key="1">
    <source>
        <dbReference type="HAMAP-Rule" id="MF_01588"/>
    </source>
</evidence>
<evidence type="ECO:0000256" key="2">
    <source>
        <dbReference type="SAM" id="MobiDB-lite"/>
    </source>
</evidence>
<feature type="chain" id="PRO_0000380359" description="DNA ligase">
    <location>
        <begin position="1"/>
        <end position="703"/>
    </location>
</feature>
<feature type="domain" description="BRCT" evidence="1">
    <location>
        <begin position="622"/>
        <end position="703"/>
    </location>
</feature>
<feature type="region of interest" description="Disordered" evidence="2">
    <location>
        <begin position="1"/>
        <end position="20"/>
    </location>
</feature>
<feature type="compositionally biased region" description="Low complexity" evidence="2">
    <location>
        <begin position="9"/>
        <end position="20"/>
    </location>
</feature>
<feature type="active site" description="N6-AMP-lysine intermediate" evidence="1">
    <location>
        <position position="141"/>
    </location>
</feature>
<feature type="binding site" evidence="1">
    <location>
        <begin position="53"/>
        <end position="57"/>
    </location>
    <ligand>
        <name>NAD(+)</name>
        <dbReference type="ChEBI" id="CHEBI:57540"/>
    </ligand>
</feature>
<feature type="binding site" evidence="1">
    <location>
        <begin position="102"/>
        <end position="103"/>
    </location>
    <ligand>
        <name>NAD(+)</name>
        <dbReference type="ChEBI" id="CHEBI:57540"/>
    </ligand>
</feature>
<feature type="binding site" evidence="1">
    <location>
        <position position="139"/>
    </location>
    <ligand>
        <name>NAD(+)</name>
        <dbReference type="ChEBI" id="CHEBI:57540"/>
    </ligand>
</feature>
<feature type="binding site" evidence="1">
    <location>
        <position position="162"/>
    </location>
    <ligand>
        <name>NAD(+)</name>
        <dbReference type="ChEBI" id="CHEBI:57540"/>
    </ligand>
</feature>
<feature type="binding site" evidence="1">
    <location>
        <position position="200"/>
    </location>
    <ligand>
        <name>NAD(+)</name>
        <dbReference type="ChEBI" id="CHEBI:57540"/>
    </ligand>
</feature>
<feature type="binding site" evidence="1">
    <location>
        <position position="321"/>
    </location>
    <ligand>
        <name>NAD(+)</name>
        <dbReference type="ChEBI" id="CHEBI:57540"/>
    </ligand>
</feature>
<feature type="binding site" evidence="1">
    <location>
        <position position="345"/>
    </location>
    <ligand>
        <name>NAD(+)</name>
        <dbReference type="ChEBI" id="CHEBI:57540"/>
    </ligand>
</feature>
<feature type="binding site" evidence="1">
    <location>
        <position position="439"/>
    </location>
    <ligand>
        <name>Zn(2+)</name>
        <dbReference type="ChEBI" id="CHEBI:29105"/>
    </ligand>
</feature>
<feature type="binding site" evidence="1">
    <location>
        <position position="442"/>
    </location>
    <ligand>
        <name>Zn(2+)</name>
        <dbReference type="ChEBI" id="CHEBI:29105"/>
    </ligand>
</feature>
<feature type="binding site" evidence="1">
    <location>
        <position position="457"/>
    </location>
    <ligand>
        <name>Zn(2+)</name>
        <dbReference type="ChEBI" id="CHEBI:29105"/>
    </ligand>
</feature>
<feature type="binding site" evidence="1">
    <location>
        <position position="463"/>
    </location>
    <ligand>
        <name>Zn(2+)</name>
        <dbReference type="ChEBI" id="CHEBI:29105"/>
    </ligand>
</feature>
<comment type="function">
    <text evidence="1">DNA ligase that catalyzes the formation of phosphodiester linkages between 5'-phosphoryl and 3'-hydroxyl groups in double-stranded DNA using NAD as a coenzyme and as the energy source for the reaction. It is essential for DNA replication and repair of damaged DNA.</text>
</comment>
<comment type="catalytic activity">
    <reaction evidence="1">
        <text>NAD(+) + (deoxyribonucleotide)n-3'-hydroxyl + 5'-phospho-(deoxyribonucleotide)m = (deoxyribonucleotide)n+m + AMP + beta-nicotinamide D-nucleotide.</text>
        <dbReference type="EC" id="6.5.1.2"/>
    </reaction>
</comment>
<comment type="cofactor">
    <cofactor evidence="1">
        <name>Mg(2+)</name>
        <dbReference type="ChEBI" id="CHEBI:18420"/>
    </cofactor>
    <cofactor evidence="1">
        <name>Mn(2+)</name>
        <dbReference type="ChEBI" id="CHEBI:29035"/>
    </cofactor>
</comment>
<comment type="similarity">
    <text evidence="1">Belongs to the NAD-dependent DNA ligase family. LigA subfamily.</text>
</comment>
<dbReference type="EC" id="6.5.1.2" evidence="1"/>
<dbReference type="EMBL" id="CP000884">
    <property type="protein sequence ID" value="ABX36226.1"/>
    <property type="molecule type" value="Genomic_DNA"/>
</dbReference>
<dbReference type="RefSeq" id="WP_012205426.1">
    <property type="nucleotide sequence ID" value="NC_010002.1"/>
</dbReference>
<dbReference type="SMR" id="A9BZW4"/>
<dbReference type="STRING" id="398578.Daci_3592"/>
<dbReference type="GeneID" id="24114185"/>
<dbReference type="KEGG" id="dac:Daci_3592"/>
<dbReference type="eggNOG" id="COG0272">
    <property type="taxonomic scope" value="Bacteria"/>
</dbReference>
<dbReference type="HOGENOM" id="CLU_007764_2_1_4"/>
<dbReference type="Proteomes" id="UP000000784">
    <property type="component" value="Chromosome"/>
</dbReference>
<dbReference type="GO" id="GO:0005829">
    <property type="term" value="C:cytosol"/>
    <property type="evidence" value="ECO:0007669"/>
    <property type="project" value="TreeGrafter"/>
</dbReference>
<dbReference type="GO" id="GO:0003677">
    <property type="term" value="F:DNA binding"/>
    <property type="evidence" value="ECO:0007669"/>
    <property type="project" value="InterPro"/>
</dbReference>
<dbReference type="GO" id="GO:0003911">
    <property type="term" value="F:DNA ligase (NAD+) activity"/>
    <property type="evidence" value="ECO:0007669"/>
    <property type="project" value="UniProtKB-UniRule"/>
</dbReference>
<dbReference type="GO" id="GO:0046872">
    <property type="term" value="F:metal ion binding"/>
    <property type="evidence" value="ECO:0007669"/>
    <property type="project" value="UniProtKB-KW"/>
</dbReference>
<dbReference type="GO" id="GO:0006281">
    <property type="term" value="P:DNA repair"/>
    <property type="evidence" value="ECO:0007669"/>
    <property type="project" value="UniProtKB-KW"/>
</dbReference>
<dbReference type="GO" id="GO:0006260">
    <property type="term" value="P:DNA replication"/>
    <property type="evidence" value="ECO:0007669"/>
    <property type="project" value="UniProtKB-KW"/>
</dbReference>
<dbReference type="CDD" id="cd17748">
    <property type="entry name" value="BRCT_DNA_ligase_like"/>
    <property type="match status" value="1"/>
</dbReference>
<dbReference type="CDD" id="cd00114">
    <property type="entry name" value="LIGANc"/>
    <property type="match status" value="1"/>
</dbReference>
<dbReference type="FunFam" id="1.10.150.20:FF:000006">
    <property type="entry name" value="DNA ligase"/>
    <property type="match status" value="1"/>
</dbReference>
<dbReference type="FunFam" id="1.10.150.20:FF:000007">
    <property type="entry name" value="DNA ligase"/>
    <property type="match status" value="1"/>
</dbReference>
<dbReference type="FunFam" id="2.40.50.140:FF:000012">
    <property type="entry name" value="DNA ligase"/>
    <property type="match status" value="1"/>
</dbReference>
<dbReference type="FunFam" id="3.30.470.30:FF:000001">
    <property type="entry name" value="DNA ligase"/>
    <property type="match status" value="1"/>
</dbReference>
<dbReference type="FunFam" id="3.40.50.10190:FF:000054">
    <property type="entry name" value="DNA ligase"/>
    <property type="match status" value="1"/>
</dbReference>
<dbReference type="Gene3D" id="6.20.10.30">
    <property type="match status" value="1"/>
</dbReference>
<dbReference type="Gene3D" id="1.10.150.20">
    <property type="entry name" value="5' to 3' exonuclease, C-terminal subdomain"/>
    <property type="match status" value="2"/>
</dbReference>
<dbReference type="Gene3D" id="3.40.50.10190">
    <property type="entry name" value="BRCT domain"/>
    <property type="match status" value="1"/>
</dbReference>
<dbReference type="Gene3D" id="3.30.470.30">
    <property type="entry name" value="DNA ligase/mRNA capping enzyme"/>
    <property type="match status" value="1"/>
</dbReference>
<dbReference type="Gene3D" id="1.10.287.610">
    <property type="entry name" value="Helix hairpin bin"/>
    <property type="match status" value="1"/>
</dbReference>
<dbReference type="Gene3D" id="2.40.50.140">
    <property type="entry name" value="Nucleic acid-binding proteins"/>
    <property type="match status" value="1"/>
</dbReference>
<dbReference type="HAMAP" id="MF_01588">
    <property type="entry name" value="DNA_ligase_A"/>
    <property type="match status" value="1"/>
</dbReference>
<dbReference type="InterPro" id="IPR001357">
    <property type="entry name" value="BRCT_dom"/>
</dbReference>
<dbReference type="InterPro" id="IPR036420">
    <property type="entry name" value="BRCT_dom_sf"/>
</dbReference>
<dbReference type="InterPro" id="IPR041663">
    <property type="entry name" value="DisA/LigA_HHH"/>
</dbReference>
<dbReference type="InterPro" id="IPR001679">
    <property type="entry name" value="DNA_ligase"/>
</dbReference>
<dbReference type="InterPro" id="IPR018239">
    <property type="entry name" value="DNA_ligase_AS"/>
</dbReference>
<dbReference type="InterPro" id="IPR033136">
    <property type="entry name" value="DNA_ligase_CS"/>
</dbReference>
<dbReference type="InterPro" id="IPR013839">
    <property type="entry name" value="DNAligase_adenylation"/>
</dbReference>
<dbReference type="InterPro" id="IPR013840">
    <property type="entry name" value="DNAligase_N"/>
</dbReference>
<dbReference type="InterPro" id="IPR003583">
    <property type="entry name" value="Hlx-hairpin-Hlx_DNA-bd_motif"/>
</dbReference>
<dbReference type="InterPro" id="IPR012340">
    <property type="entry name" value="NA-bd_OB-fold"/>
</dbReference>
<dbReference type="InterPro" id="IPR004150">
    <property type="entry name" value="NAD_DNA_ligase_OB"/>
</dbReference>
<dbReference type="InterPro" id="IPR010994">
    <property type="entry name" value="RuvA_2-like"/>
</dbReference>
<dbReference type="InterPro" id="IPR004149">
    <property type="entry name" value="Znf_DNAligase_C4"/>
</dbReference>
<dbReference type="NCBIfam" id="TIGR00575">
    <property type="entry name" value="dnlj"/>
    <property type="match status" value="1"/>
</dbReference>
<dbReference type="NCBIfam" id="NF005932">
    <property type="entry name" value="PRK07956.1"/>
    <property type="match status" value="1"/>
</dbReference>
<dbReference type="PANTHER" id="PTHR23389">
    <property type="entry name" value="CHROMOSOME TRANSMISSION FIDELITY FACTOR 18"/>
    <property type="match status" value="1"/>
</dbReference>
<dbReference type="PANTHER" id="PTHR23389:SF9">
    <property type="entry name" value="DNA LIGASE"/>
    <property type="match status" value="1"/>
</dbReference>
<dbReference type="Pfam" id="PF00533">
    <property type="entry name" value="BRCT"/>
    <property type="match status" value="1"/>
</dbReference>
<dbReference type="Pfam" id="PF01653">
    <property type="entry name" value="DNA_ligase_aden"/>
    <property type="match status" value="1"/>
</dbReference>
<dbReference type="Pfam" id="PF03120">
    <property type="entry name" value="DNA_ligase_OB"/>
    <property type="match status" value="1"/>
</dbReference>
<dbReference type="Pfam" id="PF03119">
    <property type="entry name" value="DNA_ligase_ZBD"/>
    <property type="match status" value="1"/>
</dbReference>
<dbReference type="Pfam" id="PF12826">
    <property type="entry name" value="HHH_2"/>
    <property type="match status" value="1"/>
</dbReference>
<dbReference type="Pfam" id="PF22745">
    <property type="entry name" value="Nlig-Ia"/>
    <property type="match status" value="1"/>
</dbReference>
<dbReference type="PIRSF" id="PIRSF001604">
    <property type="entry name" value="LigA"/>
    <property type="match status" value="1"/>
</dbReference>
<dbReference type="SMART" id="SM00292">
    <property type="entry name" value="BRCT"/>
    <property type="match status" value="1"/>
</dbReference>
<dbReference type="SMART" id="SM00278">
    <property type="entry name" value="HhH1"/>
    <property type="match status" value="3"/>
</dbReference>
<dbReference type="SMART" id="SM00532">
    <property type="entry name" value="LIGANc"/>
    <property type="match status" value="1"/>
</dbReference>
<dbReference type="SUPFAM" id="SSF52113">
    <property type="entry name" value="BRCT domain"/>
    <property type="match status" value="1"/>
</dbReference>
<dbReference type="SUPFAM" id="SSF56091">
    <property type="entry name" value="DNA ligase/mRNA capping enzyme, catalytic domain"/>
    <property type="match status" value="1"/>
</dbReference>
<dbReference type="SUPFAM" id="SSF50249">
    <property type="entry name" value="Nucleic acid-binding proteins"/>
    <property type="match status" value="1"/>
</dbReference>
<dbReference type="SUPFAM" id="SSF47781">
    <property type="entry name" value="RuvA domain 2-like"/>
    <property type="match status" value="1"/>
</dbReference>
<dbReference type="PROSITE" id="PS50172">
    <property type="entry name" value="BRCT"/>
    <property type="match status" value="1"/>
</dbReference>
<dbReference type="PROSITE" id="PS01055">
    <property type="entry name" value="DNA_LIGASE_N1"/>
    <property type="match status" value="1"/>
</dbReference>
<dbReference type="PROSITE" id="PS01056">
    <property type="entry name" value="DNA_LIGASE_N2"/>
    <property type="match status" value="1"/>
</dbReference>
<sequence length="703" mass="75729">MNDNLDLFSGAAPAAPESGAAPDKVLAKVQALRAQLNQWAHEYYVLDTPTVPDGEYDRVFQQLQALEGAYPELVTPDSPTQRVIGAVLDGLMPVRHAVPMLSIRTETDNEATGAEAFDARIRKELELAEGAPPVEYVAEPKFDGLAMNLRYENGRLVQATTRGDGEVGEDVTHNIRTIRKIPLSLPEGKGVPPVVEVRGEVYMGRADFVKLNERQQAAGGKSFANPRNAAAGSVRQLDSGIAAQRPLSFFAYGLGEITPAAQGGPDFVTHYAMLQTLRDWGFPVAPQVCIAKGAAELVAFHQRMGAERATLPYEIDGVVYKVNSLAQQRQLGFVSREPRWAVAHKYPAEEMPTRMEGIDIQVGRTGKLTPVARLAPVAVGGVIVTNATLHNLFEIRKKRVRTGDTVVVRRAGDVIPEVVGRVPGDRPAYVPNFRMPAACPICGSAVARPKGEANHRCTGGLFCPAQRKEAILHFAARRAMDIEGLGDKLVDQLVDGHVVRTLPDLYRLGLVALASLDRMAEKSAQNVLDALEKSKKTTLSRFLFGLGIRQVGESTAKDLARHFGQLDAIMDASVEQLLQVRDVGPIVAESIHTFFAQPHNREVVEQLRACGVHWEEGAAREQTAQPLAGMTVVLTGTLPTLGRDQAKEMLEAAGAKVSGSVSKKTSYVVAGAEAGSKLAKAEELGVTVLDEAGMLALLAGGDR</sequence>
<keyword id="KW-0227">DNA damage</keyword>
<keyword id="KW-0234">DNA repair</keyword>
<keyword id="KW-0235">DNA replication</keyword>
<keyword id="KW-0436">Ligase</keyword>
<keyword id="KW-0460">Magnesium</keyword>
<keyword id="KW-0464">Manganese</keyword>
<keyword id="KW-0479">Metal-binding</keyword>
<keyword id="KW-0520">NAD</keyword>
<keyword id="KW-1185">Reference proteome</keyword>
<keyword id="KW-0862">Zinc</keyword>
<protein>
    <recommendedName>
        <fullName evidence="1">DNA ligase</fullName>
        <ecNumber evidence="1">6.5.1.2</ecNumber>
    </recommendedName>
    <alternativeName>
        <fullName evidence="1">Polydeoxyribonucleotide synthase [NAD(+)]</fullName>
    </alternativeName>
</protein>
<accession>A9BZW4</accession>
<reference key="1">
    <citation type="submission" date="2007-11" db="EMBL/GenBank/DDBJ databases">
        <title>Complete sequence of Delftia acidovorans DSM 14801 / SPH-1.</title>
        <authorList>
            <person name="Copeland A."/>
            <person name="Lucas S."/>
            <person name="Lapidus A."/>
            <person name="Barry K."/>
            <person name="Glavina del Rio T."/>
            <person name="Dalin E."/>
            <person name="Tice H."/>
            <person name="Pitluck S."/>
            <person name="Lowry S."/>
            <person name="Clum A."/>
            <person name="Schmutz J."/>
            <person name="Larimer F."/>
            <person name="Land M."/>
            <person name="Hauser L."/>
            <person name="Kyrpides N."/>
            <person name="Kim E."/>
            <person name="Schleheck D."/>
            <person name="Richardson P."/>
        </authorList>
    </citation>
    <scope>NUCLEOTIDE SEQUENCE [LARGE SCALE GENOMIC DNA]</scope>
    <source>
        <strain>DSM 14801 / SPH-1</strain>
    </source>
</reference>
<organism>
    <name type="scientific">Delftia acidovorans (strain DSM 14801 / SPH-1)</name>
    <dbReference type="NCBI Taxonomy" id="398578"/>
    <lineage>
        <taxon>Bacteria</taxon>
        <taxon>Pseudomonadati</taxon>
        <taxon>Pseudomonadota</taxon>
        <taxon>Betaproteobacteria</taxon>
        <taxon>Burkholderiales</taxon>
        <taxon>Comamonadaceae</taxon>
        <taxon>Delftia</taxon>
    </lineage>
</organism>
<gene>
    <name evidence="1" type="primary">ligA</name>
    <name type="ordered locus">Daci_3592</name>
</gene>
<proteinExistence type="inferred from homology"/>
<name>DNLJ_DELAS</name>